<proteinExistence type="inferred from homology"/>
<dbReference type="EC" id="1.8.98.-" evidence="5"/>
<dbReference type="EMBL" id="Y09871">
    <property type="protein sequence ID" value="CAA70999.1"/>
    <property type="molecule type" value="Genomic_DNA"/>
</dbReference>
<dbReference type="EMBL" id="AE009439">
    <property type="protein sequence ID" value="AAM01482.1"/>
    <property type="molecule type" value="Genomic_DNA"/>
</dbReference>
<dbReference type="RefSeq" id="WP_011018637.1">
    <property type="nucleotide sequence ID" value="NC_003551.1"/>
</dbReference>
<dbReference type="SMR" id="P96801"/>
<dbReference type="STRING" id="190192.MK0265"/>
<dbReference type="PaxDb" id="190192-MK0265"/>
<dbReference type="EnsemblBacteria" id="AAM01482">
    <property type="protein sequence ID" value="AAM01482"/>
    <property type="gene ID" value="MK0265"/>
</dbReference>
<dbReference type="GeneID" id="1477568"/>
<dbReference type="KEGG" id="mka:MK0265"/>
<dbReference type="PATRIC" id="fig|190192.8.peg.268"/>
<dbReference type="HOGENOM" id="CLU_020302_0_0_2"/>
<dbReference type="InParanoid" id="P96801"/>
<dbReference type="OrthoDB" id="32867at2157"/>
<dbReference type="UniPathway" id="UPA00647">
    <property type="reaction ID" value="UER00700"/>
</dbReference>
<dbReference type="Proteomes" id="UP000001826">
    <property type="component" value="Chromosome"/>
</dbReference>
<dbReference type="GO" id="GO:0051539">
    <property type="term" value="F:4 iron, 4 sulfur cluster binding"/>
    <property type="evidence" value="ECO:0007669"/>
    <property type="project" value="UniProtKB-KW"/>
</dbReference>
<dbReference type="GO" id="GO:0046872">
    <property type="term" value="F:metal ion binding"/>
    <property type="evidence" value="ECO:0007669"/>
    <property type="project" value="UniProtKB-KW"/>
</dbReference>
<dbReference type="GO" id="GO:0016491">
    <property type="term" value="F:oxidoreductase activity"/>
    <property type="evidence" value="ECO:0007669"/>
    <property type="project" value="UniProtKB-KW"/>
</dbReference>
<dbReference type="GO" id="GO:0015948">
    <property type="term" value="P:methanogenesis"/>
    <property type="evidence" value="ECO:0007669"/>
    <property type="project" value="UniProtKB-KW"/>
</dbReference>
<dbReference type="FunFam" id="3.50.50.60:FF:000644">
    <property type="entry name" value="H(2):CoB-CoM heterodisulfide,ferredoxin reductase subunit A"/>
    <property type="match status" value="1"/>
</dbReference>
<dbReference type="Gene3D" id="3.30.70.20">
    <property type="match status" value="3"/>
</dbReference>
<dbReference type="Gene3D" id="3.50.50.60">
    <property type="entry name" value="FAD/NAD(P)-binding domain"/>
    <property type="match status" value="2"/>
</dbReference>
<dbReference type="Gene3D" id="3.40.50.720">
    <property type="entry name" value="NAD(P)-binding Rossmann-like Domain"/>
    <property type="match status" value="1"/>
</dbReference>
<dbReference type="InterPro" id="IPR017896">
    <property type="entry name" value="4Fe4S_Fe-S-bd"/>
</dbReference>
<dbReference type="InterPro" id="IPR017900">
    <property type="entry name" value="4Fe4S_Fe_S_CS"/>
</dbReference>
<dbReference type="InterPro" id="IPR036188">
    <property type="entry name" value="FAD/NAD-bd_sf"/>
</dbReference>
<dbReference type="InterPro" id="IPR039650">
    <property type="entry name" value="HdrA-like"/>
</dbReference>
<dbReference type="PANTHER" id="PTHR43498:SF1">
    <property type="entry name" value="COB--COM HETERODISULFIDE REDUCTASE IRON-SULFUR SUBUNIT A"/>
    <property type="match status" value="1"/>
</dbReference>
<dbReference type="PANTHER" id="PTHR43498">
    <property type="entry name" value="FERREDOXIN:COB-COM HETERODISULFIDE REDUCTASE SUBUNIT A"/>
    <property type="match status" value="1"/>
</dbReference>
<dbReference type="Pfam" id="PF12831">
    <property type="entry name" value="FAD_oxidored"/>
    <property type="match status" value="1"/>
</dbReference>
<dbReference type="Pfam" id="PF12838">
    <property type="entry name" value="Fer4_7"/>
    <property type="match status" value="1"/>
</dbReference>
<dbReference type="Pfam" id="PF13187">
    <property type="entry name" value="Fer4_9"/>
    <property type="match status" value="1"/>
</dbReference>
<dbReference type="SUPFAM" id="SSF54862">
    <property type="entry name" value="4Fe-4S ferredoxins"/>
    <property type="match status" value="1"/>
</dbReference>
<dbReference type="SUPFAM" id="SSF51905">
    <property type="entry name" value="FAD/NAD(P)-binding domain"/>
    <property type="match status" value="1"/>
</dbReference>
<dbReference type="PROSITE" id="PS00198">
    <property type="entry name" value="4FE4S_FER_1"/>
    <property type="match status" value="3"/>
</dbReference>
<dbReference type="PROSITE" id="PS51379">
    <property type="entry name" value="4FE4S_FER_2"/>
    <property type="match status" value="4"/>
</dbReference>
<reference key="1">
    <citation type="journal article" date="1997" name="Eur. J. Biochem.">
        <title>Heterodisulfide reductase from methanol-grown cells of Methanosarcina barkeri is not a flavoenzyme.</title>
        <authorList>
            <person name="Kuenkel A."/>
            <person name="Vaupel M."/>
            <person name="Heim S."/>
            <person name="Thauer R.K."/>
            <person name="Hedderich R."/>
        </authorList>
    </citation>
    <scope>NUCLEOTIDE SEQUENCE [GENOMIC DNA]</scope>
</reference>
<reference key="2">
    <citation type="journal article" date="2002" name="Proc. Natl. Acad. Sci. U.S.A.">
        <title>The complete genome of hyperthermophile Methanopyrus kandleri AV19 and monophyly of archaeal methanogens.</title>
        <authorList>
            <person name="Slesarev A.I."/>
            <person name="Mezhevaya K.V."/>
            <person name="Makarova K.S."/>
            <person name="Polushin N.N."/>
            <person name="Shcherbinina O.V."/>
            <person name="Shakhova V.V."/>
            <person name="Belova G.I."/>
            <person name="Aravind L."/>
            <person name="Natale D.A."/>
            <person name="Rogozin I.B."/>
            <person name="Tatusov R.L."/>
            <person name="Wolf Y.I."/>
            <person name="Stetter K.O."/>
            <person name="Malykh A.G."/>
            <person name="Koonin E.V."/>
            <person name="Kozyavkin S.A."/>
        </authorList>
    </citation>
    <scope>NUCLEOTIDE SEQUENCE [LARGE SCALE GENOMIC DNA]</scope>
    <source>
        <strain>AV19 / DSM 6324 / JCM 9639 / NBRC 100938</strain>
    </source>
</reference>
<accession>P96801</accession>
<name>HDRA2_METKA</name>
<organism>
    <name type="scientific">Methanopyrus kandleri (strain AV19 / DSM 6324 / JCM 9639 / NBRC 100938)</name>
    <dbReference type="NCBI Taxonomy" id="190192"/>
    <lineage>
        <taxon>Archaea</taxon>
        <taxon>Methanobacteriati</taxon>
        <taxon>Methanobacteriota</taxon>
        <taxon>Methanomada group</taxon>
        <taxon>Methanopyri</taxon>
        <taxon>Methanopyrales</taxon>
        <taxon>Methanopyraceae</taxon>
        <taxon>Methanopyrus</taxon>
    </lineage>
</organism>
<gene>
    <name type="primary">hdrA2</name>
    <name type="synonym">hdrA_2</name>
    <name type="ordered locus">MK0265</name>
</gene>
<comment type="function">
    <text evidence="1">Part of a complex that catalyzes the reversible reduction of CoM-S-S-CoB to the thiol-coenzymes H-S-CoM (coenzyme M) and H-S-CoB (coenzyme B).</text>
</comment>
<comment type="cofactor">
    <cofactor evidence="4">
        <name>[4Fe-4S] cluster</name>
        <dbReference type="ChEBI" id="CHEBI:49883"/>
    </cofactor>
    <text evidence="4">Binds 4 [4Fe-4S] clusters per subunit.</text>
</comment>
<comment type="cofactor">
    <cofactor evidence="2">
        <name>FAD</name>
        <dbReference type="ChEBI" id="CHEBI:57692"/>
    </cofactor>
</comment>
<comment type="pathway">
    <text evidence="1">Cofactor metabolism; coenzyme M-coenzyme B heterodisulfide reduction; coenzyme B and coenzyme M from coenzyme M-coenzyme B heterodisulfide: step 1/1.</text>
</comment>
<comment type="subunit">
    <text evidence="1">The ferredoxin:CoB-CoM heterodisulfide reductase is composed of three subunits; HdrA, HdrB and HdrC.</text>
</comment>
<comment type="similarity">
    <text evidence="5">Belongs to the HdrA family.</text>
</comment>
<keyword id="KW-0004">4Fe-4S</keyword>
<keyword id="KW-0274">FAD</keyword>
<keyword id="KW-0285">Flavoprotein</keyword>
<keyword id="KW-0408">Iron</keyword>
<keyword id="KW-0411">Iron-sulfur</keyword>
<keyword id="KW-0479">Metal-binding</keyword>
<keyword id="KW-0484">Methanogenesis</keyword>
<keyword id="KW-0560">Oxidoreductase</keyword>
<keyword id="KW-1185">Reference proteome</keyword>
<keyword id="KW-0677">Repeat</keyword>
<protein>
    <recommendedName>
        <fullName evidence="5">CoB--CoM heterodisulfide reductase iron-sulfur subunit A 2</fullName>
        <ecNumber evidence="5">1.8.98.-</ecNumber>
    </recommendedName>
</protein>
<feature type="chain" id="PRO_0000150059" description="CoB--CoM heterodisulfide reductase iron-sulfur subunit A 2">
    <location>
        <begin position="1"/>
        <end position="656"/>
    </location>
</feature>
<feature type="domain" description="4Fe-4S ferredoxin-type 1" evidence="4">
    <location>
        <begin position="238"/>
        <end position="269"/>
    </location>
</feature>
<feature type="domain" description="4Fe-4S ferredoxin-type 2" evidence="4">
    <location>
        <begin position="286"/>
        <end position="315"/>
    </location>
</feature>
<feature type="domain" description="4Fe-4S ferredoxin-type 3" evidence="4">
    <location>
        <begin position="577"/>
        <end position="606"/>
    </location>
</feature>
<feature type="domain" description="4Fe-4S ferredoxin-type 4" evidence="4">
    <location>
        <begin position="610"/>
        <end position="639"/>
    </location>
</feature>
<feature type="binding site" evidence="3">
    <location>
        <begin position="152"/>
        <end position="175"/>
    </location>
    <ligand>
        <name>FAD</name>
        <dbReference type="ChEBI" id="CHEBI:57692"/>
    </ligand>
</feature>
<feature type="binding site" evidence="4">
    <location>
        <position position="248"/>
    </location>
    <ligand>
        <name>[4Fe-4S] cluster</name>
        <dbReference type="ChEBI" id="CHEBI:49883"/>
        <label>1</label>
    </ligand>
</feature>
<feature type="binding site" evidence="4">
    <location>
        <position position="251"/>
    </location>
    <ligand>
        <name>[4Fe-4S] cluster</name>
        <dbReference type="ChEBI" id="CHEBI:49883"/>
        <label>1</label>
    </ligand>
</feature>
<feature type="binding site" evidence="4">
    <location>
        <position position="254"/>
    </location>
    <ligand>
        <name>[4Fe-4S] cluster</name>
        <dbReference type="ChEBI" id="CHEBI:49883"/>
        <label>1</label>
    </ligand>
</feature>
<feature type="binding site" evidence="4">
    <location>
        <position position="258"/>
    </location>
    <ligand>
        <name>[4Fe-4S] cluster</name>
        <dbReference type="ChEBI" id="CHEBI:49883"/>
        <label>2</label>
    </ligand>
</feature>
<feature type="binding site" evidence="4">
    <location>
        <position position="295"/>
    </location>
    <ligand>
        <name>[4Fe-4S] cluster</name>
        <dbReference type="ChEBI" id="CHEBI:49883"/>
        <label>2</label>
    </ligand>
</feature>
<feature type="binding site" evidence="4">
    <location>
        <position position="298"/>
    </location>
    <ligand>
        <name>[4Fe-4S] cluster</name>
        <dbReference type="ChEBI" id="CHEBI:49883"/>
        <label>2</label>
    </ligand>
</feature>
<feature type="binding site" evidence="4">
    <location>
        <position position="301"/>
    </location>
    <ligand>
        <name>[4Fe-4S] cluster</name>
        <dbReference type="ChEBI" id="CHEBI:49883"/>
        <label>2</label>
    </ligand>
</feature>
<feature type="binding site" evidence="4">
    <location>
        <position position="305"/>
    </location>
    <ligand>
        <name>[4Fe-4S] cluster</name>
        <dbReference type="ChEBI" id="CHEBI:49883"/>
        <label>1</label>
    </ligand>
</feature>
<feature type="binding site" evidence="4">
    <location>
        <position position="586"/>
    </location>
    <ligand>
        <name>[4Fe-4S] cluster</name>
        <dbReference type="ChEBI" id="CHEBI:49883"/>
        <label>3</label>
    </ligand>
</feature>
<feature type="binding site" evidence="4">
    <location>
        <position position="589"/>
    </location>
    <ligand>
        <name>[4Fe-4S] cluster</name>
        <dbReference type="ChEBI" id="CHEBI:49883"/>
        <label>3</label>
    </ligand>
</feature>
<feature type="binding site" evidence="4">
    <location>
        <position position="592"/>
    </location>
    <ligand>
        <name>[4Fe-4S] cluster</name>
        <dbReference type="ChEBI" id="CHEBI:49883"/>
        <label>3</label>
    </ligand>
</feature>
<feature type="binding site" evidence="4">
    <location>
        <position position="596"/>
    </location>
    <ligand>
        <name>[4Fe-4S] cluster</name>
        <dbReference type="ChEBI" id="CHEBI:49883"/>
        <label>4</label>
    </ligand>
</feature>
<feature type="binding site" evidence="4">
    <location>
        <position position="619"/>
    </location>
    <ligand>
        <name>[4Fe-4S] cluster</name>
        <dbReference type="ChEBI" id="CHEBI:49883"/>
        <label>4</label>
    </ligand>
</feature>
<feature type="binding site" evidence="4">
    <location>
        <position position="622"/>
    </location>
    <ligand>
        <name>[4Fe-4S] cluster</name>
        <dbReference type="ChEBI" id="CHEBI:49883"/>
        <label>4</label>
    </ligand>
</feature>
<feature type="binding site" evidence="4">
    <location>
        <position position="625"/>
    </location>
    <ligand>
        <name>[4Fe-4S] cluster</name>
        <dbReference type="ChEBI" id="CHEBI:49883"/>
        <label>4</label>
    </ligand>
</feature>
<feature type="binding site" evidence="4">
    <location>
        <position position="629"/>
    </location>
    <ligand>
        <name>[4Fe-4S] cluster</name>
        <dbReference type="ChEBI" id="CHEBI:49883"/>
        <label>3</label>
    </ligand>
</feature>
<evidence type="ECO:0000250" key="1">
    <source>
        <dbReference type="UniProtKB" id="Q6LWL2"/>
    </source>
</evidence>
<evidence type="ECO:0000250" key="2">
    <source>
        <dbReference type="UniProtKB" id="Q8TM02"/>
    </source>
</evidence>
<evidence type="ECO:0000255" key="3"/>
<evidence type="ECO:0000255" key="4">
    <source>
        <dbReference type="PROSITE-ProRule" id="PRU00711"/>
    </source>
</evidence>
<evidence type="ECO:0000305" key="5"/>
<sequence>MAEEEPRIGVYVCHCGVNIAGVVDVKEVAEFAKTLKNVVVARDYKYVCSDPGQEIIQRDIEKYDLNRVVVAACSPRLHEPTFRRCVEEAGLNPYCFEMANIREHCSWVHMDDPARATEKAKDLVRMAVAKARLLESLETIKVDVTDRALVIGGGVSGIQAALDLADMGFEVILVEKEPSIGGRMAQLDKTFPTNDCSICILAPKMVDVSKHPNIKMYTYAEVVEVDGYVGNFTVKIEKKPRYVDEDACTGCGACAEVCPIEVPNEFDEGLGMRKAIYKPFPQAVPSVFTIDEEHCIRCGLCEEVCDADAIDFDQEPEIVEEEVGAIICAIGYDTCDPTEREEYGYGVYDNVITSIELERLINASGPTGGKVVRPSDGKKPKRIAFIQCVGSRDPHRTNPYCSNVCCMYAMKLAQLIREKYPETQIDIYYMDVRAFGKGYEEYYERSQKQYGIRFIRGRPAEIVEDPETKNLIVRAEDTLLGDVVEREYDLVVLSVGMVPRDSADVIQEVLSISRSPDGFFMEAHPKLRPVDTAIDGIFLAGACQGPKDIPSSVAQGSAAAARAATALAAGEVAVEPIVSEVDEEICGGCGTCVELCPYGAIELVEKDGKLVAEVTAALCKGCGTCAAACPSGAMEQNHFKTEQLYKQIEGAFRDPA</sequence>